<organism>
    <name type="scientific">Rinderpest virus (strain L)</name>
    <name type="common">RDV</name>
    <dbReference type="NCBI Taxonomy" id="11243"/>
    <lineage>
        <taxon>Viruses</taxon>
        <taxon>Riboviria</taxon>
        <taxon>Orthornavirae</taxon>
        <taxon>Negarnaviricota</taxon>
        <taxon>Haploviricotina</taxon>
        <taxon>Monjiviricetes</taxon>
        <taxon>Mononegavirales</taxon>
        <taxon>Paramyxoviridae</taxon>
        <taxon>Orthoparamyxovirinae</taxon>
        <taxon>Morbillivirus</taxon>
        <taxon>Morbillivirus pecoris</taxon>
        <taxon>Rinderpest morbillivirus</taxon>
    </lineage>
</organism>
<feature type="chain" id="PRO_0000142634" description="Hemagglutinin glycoprotein">
    <location>
        <begin position="1"/>
        <end position="609"/>
    </location>
</feature>
<feature type="topological domain" description="Intravirion" evidence="2">
    <location>
        <begin position="1"/>
        <end position="34"/>
    </location>
</feature>
<feature type="transmembrane region" description="Helical; Signal-anchor for type II membrane protein" evidence="2">
    <location>
        <begin position="35"/>
        <end position="58"/>
    </location>
</feature>
<feature type="topological domain" description="Virion surface" evidence="2">
    <location>
        <begin position="59"/>
        <end position="609"/>
    </location>
</feature>
<feature type="glycosylation site" description="N-linked (GlcNAc...) asparagine; by host" evidence="2">
    <location>
        <position position="168"/>
    </location>
</feature>
<feature type="glycosylation site" description="N-linked (GlcNAc...) asparagine; by host" evidence="2">
    <location>
        <position position="200"/>
    </location>
</feature>
<feature type="glycosylation site" description="N-linked (GlcNAc...) asparagine; by host" evidence="2">
    <location>
        <position position="215"/>
    </location>
</feature>
<feature type="glycosylation site" description="N-linked (GlcNAc...) asparagine; by host" evidence="2">
    <location>
        <position position="395"/>
    </location>
</feature>
<proteinExistence type="inferred from homology"/>
<protein>
    <recommendedName>
        <fullName>Hemagglutinin glycoprotein</fullName>
    </recommendedName>
</protein>
<reference key="1">
    <citation type="journal article" date="1987" name="Virology">
        <title>Molecular cloning and sequence analysis of the rinderpest virus mRNA encoding the hemagglutinin protein.</title>
        <authorList>
            <person name="Tsukiyama K."/>
            <person name="Sugiyama M."/>
            <person name="Yoshikawa Y."/>
            <person name="Yamanouchi K."/>
        </authorList>
    </citation>
    <scope>NUCLEOTIDE SEQUENCE [GENOMIC RNA]</scope>
</reference>
<comment type="function">
    <text evidence="1">Attaches the virus to cell receptors and thereby initiating infection. Binding of H protein to the receptor induces a conformational change that allows the F protein to trigger virion/cell membranes fusion. Down-regulates human MCP/CD46 cell surface expression (By similarity).</text>
</comment>
<comment type="subcellular location">
    <subcellularLocation>
        <location evidence="3">Virion membrane</location>
        <topology evidence="3">Single-pass type II membrane protein</topology>
    </subcellularLocation>
    <subcellularLocation>
        <location>Host membrane</location>
        <topology>Single-pass type II membrane protein</topology>
    </subcellularLocation>
</comment>
<comment type="similarity">
    <text evidence="3">Belongs to the paramyxoviruses hemagglutinin-neuraminidase family. Non-sialidase subfamily.</text>
</comment>
<comment type="caution">
    <text evidence="3">Morbiliviruses hemagglutinins have no neuraminidase activity.</text>
</comment>
<organismHost>
    <name type="scientific">Bos indicus</name>
    <name type="common">Zebu</name>
    <dbReference type="NCBI Taxonomy" id="9915"/>
</organismHost>
<organismHost>
    <name type="scientific">Bos taurus</name>
    <name type="common">Bovine</name>
    <dbReference type="NCBI Taxonomy" id="9913"/>
</organismHost>
<organismHost>
    <name type="scientific">Bubalus bubalis</name>
    <name type="common">Domestic water buffalo</name>
    <dbReference type="NCBI Taxonomy" id="89462"/>
</organismHost>
<organismHost>
    <name type="scientific">Capra hircus</name>
    <name type="common">Goat</name>
    <dbReference type="NCBI Taxonomy" id="9925"/>
</organismHost>
<organismHost>
    <name type="scientific">Gazella</name>
    <name type="common">gazelles</name>
    <dbReference type="NCBI Taxonomy" id="9933"/>
</organismHost>
<organismHost>
    <name type="scientific">Giraffa camelopardalis</name>
    <name type="common">Giraffe</name>
    <dbReference type="NCBI Taxonomy" id="9894"/>
</organismHost>
<organismHost>
    <name type="scientific">Hippopotamus</name>
    <dbReference type="NCBI Taxonomy" id="9832"/>
</organismHost>
<organismHost>
    <name type="scientific">Ovis aries</name>
    <name type="common">Sheep</name>
    <dbReference type="NCBI Taxonomy" id="9940"/>
</organismHost>
<organismHost>
    <name type="scientific">Suidae</name>
    <name type="common">pigs</name>
    <dbReference type="NCBI Taxonomy" id="9821"/>
</organismHost>
<name>HEMA_RINDL</name>
<accession>P09460</accession>
<evidence type="ECO:0000250" key="1"/>
<evidence type="ECO:0000255" key="2"/>
<evidence type="ECO:0000305" key="3"/>
<dbReference type="EMBL" id="M17434">
    <property type="protein sequence ID" value="AAA47402.1"/>
    <property type="molecule type" value="Genomic_RNA"/>
</dbReference>
<dbReference type="PIR" id="A26799">
    <property type="entry name" value="HMNZRP"/>
</dbReference>
<dbReference type="SMR" id="P09460"/>
<dbReference type="GlyCosmos" id="P09460">
    <property type="glycosylation" value="4 sites, No reported glycans"/>
</dbReference>
<dbReference type="GO" id="GO:0033644">
    <property type="term" value="C:host cell membrane"/>
    <property type="evidence" value="ECO:0007669"/>
    <property type="project" value="UniProtKB-SubCell"/>
</dbReference>
<dbReference type="GO" id="GO:0016020">
    <property type="term" value="C:membrane"/>
    <property type="evidence" value="ECO:0007669"/>
    <property type="project" value="UniProtKB-KW"/>
</dbReference>
<dbReference type="GO" id="GO:0019031">
    <property type="term" value="C:viral envelope"/>
    <property type="evidence" value="ECO:0007669"/>
    <property type="project" value="UniProtKB-KW"/>
</dbReference>
<dbReference type="GO" id="GO:0055036">
    <property type="term" value="C:virion membrane"/>
    <property type="evidence" value="ECO:0007669"/>
    <property type="project" value="UniProtKB-SubCell"/>
</dbReference>
<dbReference type="GO" id="GO:0046789">
    <property type="term" value="F:host cell surface receptor binding"/>
    <property type="evidence" value="ECO:0007669"/>
    <property type="project" value="InterPro"/>
</dbReference>
<dbReference type="GO" id="GO:0046718">
    <property type="term" value="P:symbiont entry into host cell"/>
    <property type="evidence" value="ECO:0007669"/>
    <property type="project" value="UniProtKB-KW"/>
</dbReference>
<dbReference type="GO" id="GO:0019062">
    <property type="term" value="P:virion attachment to host cell"/>
    <property type="evidence" value="ECO:0007669"/>
    <property type="project" value="UniProtKB-KW"/>
</dbReference>
<dbReference type="Gene3D" id="2.120.10.10">
    <property type="match status" value="1"/>
</dbReference>
<dbReference type="InterPro" id="IPR000665">
    <property type="entry name" value="Hemagglutn/HN"/>
</dbReference>
<dbReference type="InterPro" id="IPR036278">
    <property type="entry name" value="Sialidase_sf"/>
</dbReference>
<dbReference type="Pfam" id="PF00423">
    <property type="entry name" value="HN"/>
    <property type="match status" value="1"/>
</dbReference>
<dbReference type="SUPFAM" id="SSF50939">
    <property type="entry name" value="Sialidases"/>
    <property type="match status" value="1"/>
</dbReference>
<gene>
    <name type="primary">H</name>
</gene>
<keyword id="KW-0325">Glycoprotein</keyword>
<keyword id="KW-0348">Hemagglutinin</keyword>
<keyword id="KW-1043">Host membrane</keyword>
<keyword id="KW-0945">Host-virus interaction</keyword>
<keyword id="KW-0472">Membrane</keyword>
<keyword id="KW-0735">Signal-anchor</keyword>
<keyword id="KW-0812">Transmembrane</keyword>
<keyword id="KW-1133">Transmembrane helix</keyword>
<keyword id="KW-1161">Viral attachment to host cell</keyword>
<keyword id="KW-0261">Viral envelope protein</keyword>
<keyword id="KW-0946">Virion</keyword>
<keyword id="KW-1160">Virus entry into host cell</keyword>
<sequence>MSSPRDRVNAFYKDNLQFKNTRVVLNKEQLLIERPYMLLAVLFVMFLSLVGLLAIAGIRLHRAAVNTAEINSGLTTSIDITKSIEYQVKDVLTPLFKIIGDEVGLRTPQRFTDLTKFISDKIKFLNPDKEYDFRDINWCISPPERIKINYDQYCAHTAAEELITMLVNSSLAGTSVLPTSLVNLGRSCTGSTTTKGQFSNMSLALSGIYSGRGYNISSMITITEKGMYGSTYLVGKHNQGARRPSTAWQRDYRVFEVGIIRELGLGTPVFHMTNYLELPRQPELEICMLALGEFKLAALCLADNSVALHYGGLRDDHKIRFVKLGVWPSPADSDTLATLSAVDPTLDGLYITTHRGIIAAGKAVWVVPVTRTDDQRKMGQCRREACREKPPPFCNSTDWEPLEAGRIPAYGILTIRLGLADKLKLTIISEFGPLITHDSGMDLYTPLDGNEYWLTIPPLQNSALGTVNTLVLEPSLKISPNILTLPIRSGGGDCYTPTYLSDLADDDVKLSSNLVILPSRNLQYVSATYDTSRVEHAIVYYIYSAGRLSSYYYPVKLPIKGDPVSLQIGCFPWGLKLWCHHFCSVIDSGTRKQVTHTGAVGIEITCNSR</sequence>